<accession>Q7Z7E8</accession>
<accession>B4DF92</accession>
<accession>Q29SN7</accession>
<accession>Q3B841</accession>
<accession>Q5I0X2</accession>
<accession>Q6IS04</accession>
<accession>Q6P7P2</accession>
<accession>Q96MV4</accession>
<accession>Q9BVX5</accession>
<accession>Q9UGL6</accession>
<protein>
    <recommendedName>
        <fullName>Ubiquitin-conjugating enzyme E2 Q1</fullName>
        <ecNumber>2.3.2.23</ecNumber>
    </recommendedName>
    <alternativeName>
        <fullName>E2 ubiquitin-conjugating enzyme Q1</fullName>
    </alternativeName>
    <alternativeName>
        <fullName>Protein NICE-5</fullName>
    </alternativeName>
    <alternativeName>
        <fullName>Ubiquitin carrier protein Q1</fullName>
    </alternativeName>
    <alternativeName>
        <fullName>Ubiquitin-protein ligase Q1</fullName>
    </alternativeName>
</protein>
<evidence type="ECO:0000250" key="1">
    <source>
        <dbReference type="UniProtKB" id="Q7TSS2"/>
    </source>
</evidence>
<evidence type="ECO:0000255" key="2">
    <source>
        <dbReference type="PROSITE-ProRule" id="PRU00388"/>
    </source>
</evidence>
<evidence type="ECO:0000256" key="3">
    <source>
        <dbReference type="SAM" id="MobiDB-lite"/>
    </source>
</evidence>
<evidence type="ECO:0000269" key="4">
    <source>
    </source>
</evidence>
<evidence type="ECO:0000269" key="5">
    <source>
    </source>
</evidence>
<evidence type="ECO:0000303" key="6">
    <source>
    </source>
</evidence>
<evidence type="ECO:0000303" key="7">
    <source>
    </source>
</evidence>
<evidence type="ECO:0000305" key="8"/>
<evidence type="ECO:0007744" key="9">
    <source>
        <dbReference type="PDB" id="2QGX"/>
    </source>
</evidence>
<evidence type="ECO:0007744" key="10">
    <source>
    </source>
</evidence>
<evidence type="ECO:0007744" key="11">
    <source>
    </source>
</evidence>
<evidence type="ECO:0007829" key="12">
    <source>
        <dbReference type="PDB" id="2QGX"/>
    </source>
</evidence>
<feature type="chain" id="PRO_0000223876" description="Ubiquitin-conjugating enzyme E2 Q1">
    <location>
        <begin position="1"/>
        <end position="422"/>
    </location>
</feature>
<feature type="domain" description="UBC core" evidence="2">
    <location>
        <begin position="251"/>
        <end position="415"/>
    </location>
</feature>
<feature type="region of interest" description="Disordered" evidence="3">
    <location>
        <begin position="1"/>
        <end position="40"/>
    </location>
</feature>
<feature type="region of interest" description="Disordered" evidence="3">
    <location>
        <begin position="174"/>
        <end position="221"/>
    </location>
</feature>
<feature type="compositionally biased region" description="Low complexity" evidence="3">
    <location>
        <begin position="1"/>
        <end position="15"/>
    </location>
</feature>
<feature type="compositionally biased region" description="Gly residues" evidence="3">
    <location>
        <begin position="16"/>
        <end position="35"/>
    </location>
</feature>
<feature type="compositionally biased region" description="Acidic residues" evidence="3">
    <location>
        <begin position="185"/>
        <end position="200"/>
    </location>
</feature>
<feature type="compositionally biased region" description="Basic and acidic residues" evidence="3">
    <location>
        <begin position="212"/>
        <end position="221"/>
    </location>
</feature>
<feature type="active site" description="Glycyl thioester intermediate" evidence="2">
    <location>
        <position position="351"/>
    </location>
</feature>
<feature type="modified residue" description="N-acetylmethionine" evidence="10 11">
    <location>
        <position position="1"/>
    </location>
</feature>
<feature type="splice variant" id="VSP_017296" description="In isoform 2." evidence="6 7">
    <location>
        <begin position="1"/>
        <end position="169"/>
    </location>
</feature>
<feature type="sequence conflict" description="In Ref. 7; CAB65097." evidence="8" ref="7">
    <original>N</original>
    <variation>Y</variation>
    <location>
        <position position="287"/>
    </location>
</feature>
<feature type="helix" evidence="12">
    <location>
        <begin position="250"/>
        <end position="264"/>
    </location>
</feature>
<feature type="helix" evidence="12">
    <location>
        <begin position="267"/>
        <end position="270"/>
    </location>
</feature>
<feature type="strand" evidence="12">
    <location>
        <begin position="273"/>
        <end position="278"/>
    </location>
</feature>
<feature type="helix" evidence="12">
    <location>
        <begin position="279"/>
        <end position="281"/>
    </location>
</feature>
<feature type="strand" evidence="12">
    <location>
        <begin position="285"/>
        <end position="291"/>
    </location>
</feature>
<feature type="helix" evidence="12">
    <location>
        <begin position="298"/>
        <end position="309"/>
    </location>
</feature>
<feature type="strand" evidence="12">
    <location>
        <begin position="315"/>
        <end position="320"/>
    </location>
</feature>
<feature type="turn" evidence="12">
    <location>
        <begin position="325"/>
        <end position="327"/>
    </location>
</feature>
<feature type="strand" evidence="12">
    <location>
        <begin position="331"/>
        <end position="337"/>
    </location>
</feature>
<feature type="strand" evidence="12">
    <location>
        <begin position="339"/>
        <end position="341"/>
    </location>
</feature>
<feature type="strand" evidence="12">
    <location>
        <begin position="348"/>
        <end position="350"/>
    </location>
</feature>
<feature type="turn" evidence="12">
    <location>
        <begin position="357"/>
        <end position="359"/>
    </location>
</feature>
<feature type="helix" evidence="12">
    <location>
        <begin position="366"/>
        <end position="379"/>
    </location>
</feature>
<feature type="strand" evidence="12">
    <location>
        <begin position="386"/>
        <end position="388"/>
    </location>
</feature>
<feature type="helix" evidence="12">
    <location>
        <begin position="390"/>
        <end position="392"/>
    </location>
</feature>
<feature type="helix" evidence="12">
    <location>
        <begin position="395"/>
        <end position="405"/>
    </location>
</feature>
<proteinExistence type="evidence at protein level"/>
<dbReference type="EC" id="2.3.2.23"/>
<dbReference type="EMBL" id="AY112698">
    <property type="protein sequence ID" value="AAM60814.1"/>
    <property type="molecule type" value="mRNA"/>
</dbReference>
<dbReference type="EMBL" id="AY948200">
    <property type="protein sequence ID" value="AAY23342.1"/>
    <property type="molecule type" value="mRNA"/>
</dbReference>
<dbReference type="EMBL" id="AK056388">
    <property type="protein sequence ID" value="BAB71173.1"/>
    <property type="status" value="ALT_INIT"/>
    <property type="molecule type" value="mRNA"/>
</dbReference>
<dbReference type="EMBL" id="AK293986">
    <property type="protein sequence ID" value="BAG57353.1"/>
    <property type="molecule type" value="mRNA"/>
</dbReference>
<dbReference type="EMBL" id="AL592078">
    <property type="status" value="NOT_ANNOTATED_CDS"/>
    <property type="molecule type" value="Genomic_DNA"/>
</dbReference>
<dbReference type="EMBL" id="CH471121">
    <property type="protein sequence ID" value="EAW53193.1"/>
    <property type="molecule type" value="Genomic_DNA"/>
</dbReference>
<dbReference type="EMBL" id="BC000848">
    <property type="protein sequence ID" value="AAH00848.1"/>
    <property type="molecule type" value="mRNA"/>
</dbReference>
<dbReference type="EMBL" id="BC015316">
    <property type="protein sequence ID" value="AAH15316.2"/>
    <property type="molecule type" value="mRNA"/>
</dbReference>
<dbReference type="EMBL" id="BC061583">
    <property type="protein sequence ID" value="AAH61583.1"/>
    <property type="status" value="ALT_INIT"/>
    <property type="molecule type" value="mRNA"/>
</dbReference>
<dbReference type="EMBL" id="BC070158">
    <property type="protein sequence ID" value="AAH70158.1"/>
    <property type="molecule type" value="mRNA"/>
</dbReference>
<dbReference type="EMBL" id="BC087836">
    <property type="protein sequence ID" value="AAH87836.1"/>
    <property type="status" value="ALT_INIT"/>
    <property type="molecule type" value="mRNA"/>
</dbReference>
<dbReference type="EMBL" id="BC107057">
    <property type="protein sequence ID" value="AAI07058.1"/>
    <property type="status" value="ALT_INIT"/>
    <property type="molecule type" value="mRNA"/>
</dbReference>
<dbReference type="EMBL" id="AJ243666">
    <property type="protein sequence ID" value="CAB65097.1"/>
    <property type="status" value="ALT_INIT"/>
    <property type="molecule type" value="mRNA"/>
</dbReference>
<dbReference type="EMBL" id="AF116721">
    <property type="protein sequence ID" value="AAF71141.1"/>
    <property type="status" value="ALT_INIT"/>
    <property type="molecule type" value="mRNA"/>
</dbReference>
<dbReference type="EMBL" id="CR457219">
    <property type="protein sequence ID" value="CAG33500.1"/>
    <property type="molecule type" value="mRNA"/>
</dbReference>
<dbReference type="CCDS" id="CCDS1069.1">
    <molecule id="Q7Z7E8-1"/>
</dbReference>
<dbReference type="RefSeq" id="NP_060052.3">
    <molecule id="Q7Z7E8-1"/>
    <property type="nucleotide sequence ID" value="NM_017582.6"/>
</dbReference>
<dbReference type="PDB" id="2QGX">
    <property type="method" value="X-ray"/>
    <property type="resolution" value="2.56 A"/>
    <property type="chains" value="A/B/C/D=247-414"/>
</dbReference>
<dbReference type="PDBsum" id="2QGX"/>
<dbReference type="SMR" id="Q7Z7E8"/>
<dbReference type="BioGRID" id="120732">
    <property type="interactions" value="62"/>
</dbReference>
<dbReference type="FunCoup" id="Q7Z7E8">
    <property type="interactions" value="4504"/>
</dbReference>
<dbReference type="IntAct" id="Q7Z7E8">
    <property type="interactions" value="34"/>
</dbReference>
<dbReference type="MINT" id="Q7Z7E8"/>
<dbReference type="STRING" id="9606.ENSP00000292211"/>
<dbReference type="GlyGen" id="Q7Z7E8">
    <property type="glycosylation" value="1 site, 1 O-linked glycan (1 site)"/>
</dbReference>
<dbReference type="iPTMnet" id="Q7Z7E8"/>
<dbReference type="PhosphoSitePlus" id="Q7Z7E8"/>
<dbReference type="BioMuta" id="UBE2Q1"/>
<dbReference type="DMDM" id="74750234"/>
<dbReference type="jPOST" id="Q7Z7E8"/>
<dbReference type="MassIVE" id="Q7Z7E8"/>
<dbReference type="PaxDb" id="9606-ENSP00000292211"/>
<dbReference type="PeptideAtlas" id="Q7Z7E8"/>
<dbReference type="ProteomicsDB" id="69523">
    <molecule id="Q7Z7E8-1"/>
</dbReference>
<dbReference type="ProteomicsDB" id="69524">
    <molecule id="Q7Z7E8-2"/>
</dbReference>
<dbReference type="Pumba" id="Q7Z7E8"/>
<dbReference type="Antibodypedia" id="34155">
    <property type="antibodies" value="141 antibodies from 22 providers"/>
</dbReference>
<dbReference type="DNASU" id="55585"/>
<dbReference type="Ensembl" id="ENST00000292211.5">
    <molecule id="Q7Z7E8-1"/>
    <property type="protein sequence ID" value="ENSP00000292211.4"/>
    <property type="gene ID" value="ENSG00000160714.11"/>
</dbReference>
<dbReference type="Ensembl" id="ENST00000718442.1">
    <molecule id="Q7Z7E8-2"/>
    <property type="protein sequence ID" value="ENSP00000520827.1"/>
    <property type="gene ID" value="ENSG00000160714.11"/>
</dbReference>
<dbReference type="GeneID" id="55585"/>
<dbReference type="KEGG" id="hsa:55585"/>
<dbReference type="MANE-Select" id="ENST00000292211.5">
    <property type="protein sequence ID" value="ENSP00000292211.4"/>
    <property type="RefSeq nucleotide sequence ID" value="NM_017582.7"/>
    <property type="RefSeq protein sequence ID" value="NP_060052.3"/>
</dbReference>
<dbReference type="UCSC" id="uc001fff.2">
    <molecule id="Q7Z7E8-1"/>
    <property type="organism name" value="human"/>
</dbReference>
<dbReference type="AGR" id="HGNC:15698"/>
<dbReference type="CTD" id="55585"/>
<dbReference type="DisGeNET" id="55585"/>
<dbReference type="GeneCards" id="UBE2Q1"/>
<dbReference type="HGNC" id="HGNC:15698">
    <property type="gene designation" value="UBE2Q1"/>
</dbReference>
<dbReference type="HPA" id="ENSG00000160714">
    <property type="expression patterns" value="Low tissue specificity"/>
</dbReference>
<dbReference type="MIM" id="617429">
    <property type="type" value="gene"/>
</dbReference>
<dbReference type="neXtProt" id="NX_Q7Z7E8"/>
<dbReference type="OpenTargets" id="ENSG00000160714"/>
<dbReference type="PharmGKB" id="PA38029"/>
<dbReference type="VEuPathDB" id="HostDB:ENSG00000160714"/>
<dbReference type="eggNOG" id="KOG0897">
    <property type="taxonomic scope" value="Eukaryota"/>
</dbReference>
<dbReference type="GeneTree" id="ENSGT00940000160166"/>
<dbReference type="HOGENOM" id="CLU_053863_0_0_1"/>
<dbReference type="InParanoid" id="Q7Z7E8"/>
<dbReference type="OMA" id="VFPKNHE"/>
<dbReference type="OrthoDB" id="109543at2759"/>
<dbReference type="PAN-GO" id="Q7Z7E8">
    <property type="GO annotations" value="3 GO annotations based on evolutionary models"/>
</dbReference>
<dbReference type="PhylomeDB" id="Q7Z7E8"/>
<dbReference type="TreeFam" id="TF313338"/>
<dbReference type="BRENDA" id="2.3.2.23">
    <property type="organism ID" value="2681"/>
</dbReference>
<dbReference type="PathwayCommons" id="Q7Z7E8"/>
<dbReference type="Reactome" id="R-HSA-983168">
    <property type="pathway name" value="Antigen processing: Ubiquitination &amp; Proteasome degradation"/>
</dbReference>
<dbReference type="SignaLink" id="Q7Z7E8"/>
<dbReference type="SIGNOR" id="Q7Z7E8"/>
<dbReference type="UniPathway" id="UPA00143"/>
<dbReference type="BioGRID-ORCS" id="55585">
    <property type="hits" value="86 hits in 1168 CRISPR screens"/>
</dbReference>
<dbReference type="ChiTaRS" id="UBE2Q1">
    <property type="organism name" value="human"/>
</dbReference>
<dbReference type="EvolutionaryTrace" id="Q7Z7E8"/>
<dbReference type="GenomeRNAi" id="55585"/>
<dbReference type="Pharos" id="Q7Z7E8">
    <property type="development level" value="Tbio"/>
</dbReference>
<dbReference type="PRO" id="PR:Q7Z7E8"/>
<dbReference type="Proteomes" id="UP000005640">
    <property type="component" value="Chromosome 1"/>
</dbReference>
<dbReference type="RNAct" id="Q7Z7E8">
    <property type="molecule type" value="protein"/>
</dbReference>
<dbReference type="Bgee" id="ENSG00000160714">
    <property type="expression patterns" value="Expressed in left testis and 203 other cell types or tissues"/>
</dbReference>
<dbReference type="GO" id="GO:0005829">
    <property type="term" value="C:cytosol"/>
    <property type="evidence" value="ECO:0007669"/>
    <property type="project" value="UniProtKB-SubCell"/>
</dbReference>
<dbReference type="GO" id="GO:0030175">
    <property type="term" value="C:filopodium"/>
    <property type="evidence" value="ECO:0007669"/>
    <property type="project" value="UniProtKB-SubCell"/>
</dbReference>
<dbReference type="GO" id="GO:0005634">
    <property type="term" value="C:nucleus"/>
    <property type="evidence" value="ECO:0000318"/>
    <property type="project" value="GO_Central"/>
</dbReference>
<dbReference type="GO" id="GO:0005524">
    <property type="term" value="F:ATP binding"/>
    <property type="evidence" value="ECO:0007669"/>
    <property type="project" value="UniProtKB-KW"/>
</dbReference>
<dbReference type="GO" id="GO:0061631">
    <property type="term" value="F:ubiquitin conjugating enzyme activity"/>
    <property type="evidence" value="ECO:0000318"/>
    <property type="project" value="GO_Central"/>
</dbReference>
<dbReference type="GO" id="GO:0007566">
    <property type="term" value="P:embryo implantation"/>
    <property type="evidence" value="ECO:0007669"/>
    <property type="project" value="Ensembl"/>
</dbReference>
<dbReference type="GO" id="GO:0009566">
    <property type="term" value="P:fertilization"/>
    <property type="evidence" value="ECO:0007669"/>
    <property type="project" value="Ensembl"/>
</dbReference>
<dbReference type="GO" id="GO:0007617">
    <property type="term" value="P:mating behavior"/>
    <property type="evidence" value="ECO:0007669"/>
    <property type="project" value="Ensembl"/>
</dbReference>
<dbReference type="GO" id="GO:0070459">
    <property type="term" value="P:prolactin secretion"/>
    <property type="evidence" value="ECO:0007669"/>
    <property type="project" value="Ensembl"/>
</dbReference>
<dbReference type="GO" id="GO:0000209">
    <property type="term" value="P:protein polyubiquitination"/>
    <property type="evidence" value="ECO:0000318"/>
    <property type="project" value="GO_Central"/>
</dbReference>
<dbReference type="GO" id="GO:0061458">
    <property type="term" value="P:reproductive system development"/>
    <property type="evidence" value="ECO:0007669"/>
    <property type="project" value="Ensembl"/>
</dbReference>
<dbReference type="GO" id="GO:0001967">
    <property type="term" value="P:suckling behavior"/>
    <property type="evidence" value="ECO:0007669"/>
    <property type="project" value="Ensembl"/>
</dbReference>
<dbReference type="CDD" id="cd23802">
    <property type="entry name" value="UBCc_UBE2Q"/>
    <property type="match status" value="1"/>
</dbReference>
<dbReference type="FunFam" id="3.10.110.10:FF:000006">
    <property type="entry name" value="Ubiquitin-conjugating enzyme E2 Q2"/>
    <property type="match status" value="1"/>
</dbReference>
<dbReference type="Gene3D" id="3.10.110.10">
    <property type="entry name" value="Ubiquitin Conjugating Enzyme"/>
    <property type="match status" value="1"/>
</dbReference>
<dbReference type="IDEAL" id="IID00639"/>
<dbReference type="InterPro" id="IPR000608">
    <property type="entry name" value="UBQ-conjugat_E2_core"/>
</dbReference>
<dbReference type="InterPro" id="IPR016135">
    <property type="entry name" value="UBQ-conjugating_enzyme/RWD"/>
</dbReference>
<dbReference type="Pfam" id="PF00179">
    <property type="entry name" value="UQ_con"/>
    <property type="match status" value="1"/>
</dbReference>
<dbReference type="SMART" id="SM00212">
    <property type="entry name" value="UBCc"/>
    <property type="match status" value="1"/>
</dbReference>
<dbReference type="SUPFAM" id="SSF54495">
    <property type="entry name" value="UBC-like"/>
    <property type="match status" value="2"/>
</dbReference>
<dbReference type="PROSITE" id="PS50127">
    <property type="entry name" value="UBC_2"/>
    <property type="match status" value="1"/>
</dbReference>
<sequence length="422" mass="46127">MQQPQPQGQQQPGPGQQLGGQGAAPGAGGGPGGGPGPGPCLRRELKLLESIFHRGHERFRIASACLDELSCEFLLAGAGGAGAGAAPGPHLPPRGSVPGDPVRIHCNITESYPAVPPIWSVESDDPNLAAVLERLVDIKKGNTLLLQHLKRIISDLCKLYNLPQHPDVEMLDQPLPAEQCTQEDVSSEDEDEEMPEDTEDLDHYEMKEEEPAEGKKSEDDGIGKENLAILEKIKKNQRQDYLNGAVSGSVQATDRLMKELRDIYRSQSFKGGNYAVELVNDSLYDWNVKLLKVDQDSALHNDLQILKEKEGADFILLNFSFKDNFPFDPPFVRVVSPVLSGGYVLGGGAICMELLTKQGWSSAYSIESVIMQISATLVKGKARVQFGANKSQYSLTRAQQSYKSLVQIHEKNGWYTPPKEDG</sequence>
<comment type="function">
    <text evidence="1 5">Catalyzes the covalent attachment of ubiquitin to other proteins (PubMed:22496338). May be involved in hormonal homeostasis in females. Involved in regulation of B4GALT1 cell surface expression, B4GALT1-mediated cell adhesion to laminin and embryoid body formation (By similarity).</text>
</comment>
<comment type="catalytic activity">
    <reaction evidence="2">
        <text>S-ubiquitinyl-[E1 ubiquitin-activating enzyme]-L-cysteine + [E2 ubiquitin-conjugating enzyme]-L-cysteine = [E1 ubiquitin-activating enzyme]-L-cysteine + S-ubiquitinyl-[E2 ubiquitin-conjugating enzyme]-L-cysteine.</text>
        <dbReference type="EC" id="2.3.2.23"/>
    </reaction>
</comment>
<comment type="pathway">
    <text evidence="2">Protein modification; protein ubiquitination.</text>
</comment>
<comment type="subunit">
    <text evidence="1">Monomer and homodimer. Only the homodimer is linked to ubiquitin through thiolester activation. Interacts (via N-terminus) with B4GALT1 (via N-terminal cytoplasmic domain). The interaction is direct.</text>
</comment>
<comment type="interaction">
    <interactant intactId="EBI-1783287">
        <id>Q7Z7E8</id>
    </interactant>
    <interactant intactId="EBI-357085">
        <id>Q9UNE7</id>
        <label>STUB1</label>
    </interactant>
    <organismsDiffer>false</organismsDiffer>
    <experiments>3</experiments>
</comment>
<comment type="interaction">
    <interactant intactId="EBI-1783287">
        <id>Q7Z7E8</id>
    </interactant>
    <interactant intactId="EBI-59042461">
        <id>Q5ZSJ1</id>
        <label>lpg2526</label>
    </interactant>
    <organismsDiffer>true</organismsDiffer>
    <experiments>3</experiments>
</comment>
<comment type="interaction">
    <interactant intactId="EBI-10258181">
        <id>Q7Z7E8-2</id>
    </interactant>
    <interactant intactId="EBI-741101">
        <id>Q13643</id>
        <label>FHL3</label>
    </interactant>
    <organismsDiffer>false</organismsDiffer>
    <experiments>3</experiments>
</comment>
<comment type="interaction">
    <interactant intactId="EBI-10258181">
        <id>Q7Z7E8-2</id>
    </interactant>
    <interactant intactId="EBI-356942">
        <id>P62879</id>
        <label>GNB2</label>
    </interactant>
    <organismsDiffer>false</organismsDiffer>
    <experiments>3</experiments>
</comment>
<comment type="subcellular location">
    <subcellularLocation>
        <location evidence="1">Nucleus</location>
    </subcellularLocation>
    <subcellularLocation>
        <location evidence="1">Cell projection</location>
        <location evidence="1">Filopodium</location>
    </subcellularLocation>
    <subcellularLocation>
        <location evidence="1">Cytoplasm</location>
        <location evidence="1">Cytosol</location>
    </subcellularLocation>
</comment>
<comment type="alternative products">
    <event type="alternative splicing"/>
    <isoform>
        <id>Q7Z7E8-1</id>
        <name>1</name>
        <sequence type="displayed"/>
    </isoform>
    <isoform>
        <id>Q7Z7E8-2</id>
        <name>2</name>
        <sequence type="described" ref="VSP_017296"/>
    </isoform>
</comment>
<comment type="tissue specificity">
    <text evidence="4">Widely expressed.</text>
</comment>
<comment type="PTM">
    <text evidence="5">Autoubiquitinated in vitro in the presence of NEDD4L.</text>
</comment>
<comment type="similarity">
    <text evidence="2">Belongs to the ubiquitin-conjugating enzyme family.</text>
</comment>
<comment type="sequence caution" evidence="8">
    <conflict type="erroneous initiation">
        <sequence resource="EMBL-CDS" id="AAF71141"/>
    </conflict>
</comment>
<comment type="sequence caution" evidence="8">
    <conflict type="erroneous initiation">
        <sequence resource="EMBL-CDS" id="AAH61583"/>
    </conflict>
</comment>
<comment type="sequence caution" evidence="8">
    <conflict type="erroneous initiation">
        <sequence resource="EMBL-CDS" id="AAH87836"/>
    </conflict>
</comment>
<comment type="sequence caution" evidence="8">
    <conflict type="erroneous initiation">
        <sequence resource="EMBL-CDS" id="AAI07058"/>
    </conflict>
</comment>
<comment type="sequence caution" evidence="8">
    <conflict type="erroneous initiation">
        <sequence resource="EMBL-CDS" id="BAB71173"/>
    </conflict>
</comment>
<comment type="sequence caution" evidence="8">
    <conflict type="erroneous initiation">
        <sequence resource="EMBL-CDS" id="CAB65097"/>
    </conflict>
</comment>
<name>UB2Q1_HUMAN</name>
<keyword id="KW-0002">3D-structure</keyword>
<keyword id="KW-0007">Acetylation</keyword>
<keyword id="KW-0025">Alternative splicing</keyword>
<keyword id="KW-0067">ATP-binding</keyword>
<keyword id="KW-0966">Cell projection</keyword>
<keyword id="KW-0963">Cytoplasm</keyword>
<keyword id="KW-0547">Nucleotide-binding</keyword>
<keyword id="KW-0539">Nucleus</keyword>
<keyword id="KW-1267">Proteomics identification</keyword>
<keyword id="KW-1185">Reference proteome</keyword>
<keyword id="KW-0808">Transferase</keyword>
<keyword id="KW-0832">Ubl conjugation</keyword>
<keyword id="KW-0833">Ubl conjugation pathway</keyword>
<organism>
    <name type="scientific">Homo sapiens</name>
    <name type="common">Human</name>
    <dbReference type="NCBI Taxonomy" id="9606"/>
    <lineage>
        <taxon>Eukaryota</taxon>
        <taxon>Metazoa</taxon>
        <taxon>Chordata</taxon>
        <taxon>Craniata</taxon>
        <taxon>Vertebrata</taxon>
        <taxon>Euteleostomi</taxon>
        <taxon>Mammalia</taxon>
        <taxon>Eutheria</taxon>
        <taxon>Euarchontoglires</taxon>
        <taxon>Primates</taxon>
        <taxon>Haplorrhini</taxon>
        <taxon>Catarrhini</taxon>
        <taxon>Hominidae</taxon>
        <taxon>Homo</taxon>
    </lineage>
</organism>
<reference key="1">
    <citation type="submission" date="2002-05" db="EMBL/GenBank/DDBJ databases">
        <title>Isolation and characterization of the human UBE2Q gene and its murine ortholog.</title>
        <authorList>
            <person name="Altmann M.E."/>
            <person name="Schulze E."/>
            <person name="Adham I.M."/>
            <person name="Koehler M."/>
            <person name="Engel W."/>
        </authorList>
    </citation>
    <scope>NUCLEOTIDE SEQUENCE [MRNA] (ISOFORM 1)</scope>
</reference>
<reference key="2">
    <citation type="submission" date="2005-02" db="EMBL/GenBank/DDBJ databases">
        <title>Cloning and characterization of galactosyl transferase-associated protein (GTAP), a human ubiquitin-conjugating enzyme that regulate stem cell adhesion, growth and differentiation.</title>
        <authorList>
            <person name="Wassler M."/>
            <person name="Sagar B."/>
            <person name="Geng Y.-J."/>
        </authorList>
    </citation>
    <scope>NUCLEOTIDE SEQUENCE [MRNA]</scope>
</reference>
<reference key="3">
    <citation type="journal article" date="2004" name="Nat. Genet.">
        <title>Complete sequencing and characterization of 21,243 full-length human cDNAs.</title>
        <authorList>
            <person name="Ota T."/>
            <person name="Suzuki Y."/>
            <person name="Nishikawa T."/>
            <person name="Otsuki T."/>
            <person name="Sugiyama T."/>
            <person name="Irie R."/>
            <person name="Wakamatsu A."/>
            <person name="Hayashi K."/>
            <person name="Sato H."/>
            <person name="Nagai K."/>
            <person name="Kimura K."/>
            <person name="Makita H."/>
            <person name="Sekine M."/>
            <person name="Obayashi M."/>
            <person name="Nishi T."/>
            <person name="Shibahara T."/>
            <person name="Tanaka T."/>
            <person name="Ishii S."/>
            <person name="Yamamoto J."/>
            <person name="Saito K."/>
            <person name="Kawai Y."/>
            <person name="Isono Y."/>
            <person name="Nakamura Y."/>
            <person name="Nagahari K."/>
            <person name="Murakami K."/>
            <person name="Yasuda T."/>
            <person name="Iwayanagi T."/>
            <person name="Wagatsuma M."/>
            <person name="Shiratori A."/>
            <person name="Sudo H."/>
            <person name="Hosoiri T."/>
            <person name="Kaku Y."/>
            <person name="Kodaira H."/>
            <person name="Kondo H."/>
            <person name="Sugawara M."/>
            <person name="Takahashi M."/>
            <person name="Kanda K."/>
            <person name="Yokoi T."/>
            <person name="Furuya T."/>
            <person name="Kikkawa E."/>
            <person name="Omura Y."/>
            <person name="Abe K."/>
            <person name="Kamihara K."/>
            <person name="Katsuta N."/>
            <person name="Sato K."/>
            <person name="Tanikawa M."/>
            <person name="Yamazaki M."/>
            <person name="Ninomiya K."/>
            <person name="Ishibashi T."/>
            <person name="Yamashita H."/>
            <person name="Murakawa K."/>
            <person name="Fujimori K."/>
            <person name="Tanai H."/>
            <person name="Kimata M."/>
            <person name="Watanabe M."/>
            <person name="Hiraoka S."/>
            <person name="Chiba Y."/>
            <person name="Ishida S."/>
            <person name="Ono Y."/>
            <person name="Takiguchi S."/>
            <person name="Watanabe S."/>
            <person name="Yosida M."/>
            <person name="Hotuta T."/>
            <person name="Kusano J."/>
            <person name="Kanehori K."/>
            <person name="Takahashi-Fujii A."/>
            <person name="Hara H."/>
            <person name="Tanase T.-O."/>
            <person name="Nomura Y."/>
            <person name="Togiya S."/>
            <person name="Komai F."/>
            <person name="Hara R."/>
            <person name="Takeuchi K."/>
            <person name="Arita M."/>
            <person name="Imose N."/>
            <person name="Musashino K."/>
            <person name="Yuuki H."/>
            <person name="Oshima A."/>
            <person name="Sasaki N."/>
            <person name="Aotsuka S."/>
            <person name="Yoshikawa Y."/>
            <person name="Matsunawa H."/>
            <person name="Ichihara T."/>
            <person name="Shiohata N."/>
            <person name="Sano S."/>
            <person name="Moriya S."/>
            <person name="Momiyama H."/>
            <person name="Satoh N."/>
            <person name="Takami S."/>
            <person name="Terashima Y."/>
            <person name="Suzuki O."/>
            <person name="Nakagawa S."/>
            <person name="Senoh A."/>
            <person name="Mizoguchi H."/>
            <person name="Goto Y."/>
            <person name="Shimizu F."/>
            <person name="Wakebe H."/>
            <person name="Hishigaki H."/>
            <person name="Watanabe T."/>
            <person name="Sugiyama A."/>
            <person name="Takemoto M."/>
            <person name="Kawakami B."/>
            <person name="Yamazaki M."/>
            <person name="Watanabe K."/>
            <person name="Kumagai A."/>
            <person name="Itakura S."/>
            <person name="Fukuzumi Y."/>
            <person name="Fujimori Y."/>
            <person name="Komiyama M."/>
            <person name="Tashiro H."/>
            <person name="Tanigami A."/>
            <person name="Fujiwara T."/>
            <person name="Ono T."/>
            <person name="Yamada K."/>
            <person name="Fujii Y."/>
            <person name="Ozaki K."/>
            <person name="Hirao M."/>
            <person name="Ohmori Y."/>
            <person name="Kawabata A."/>
            <person name="Hikiji T."/>
            <person name="Kobatake N."/>
            <person name="Inagaki H."/>
            <person name="Ikema Y."/>
            <person name="Okamoto S."/>
            <person name="Okitani R."/>
            <person name="Kawakami T."/>
            <person name="Noguchi S."/>
            <person name="Itoh T."/>
            <person name="Shigeta K."/>
            <person name="Senba T."/>
            <person name="Matsumura K."/>
            <person name="Nakajima Y."/>
            <person name="Mizuno T."/>
            <person name="Morinaga M."/>
            <person name="Sasaki M."/>
            <person name="Togashi T."/>
            <person name="Oyama M."/>
            <person name="Hata H."/>
            <person name="Watanabe M."/>
            <person name="Komatsu T."/>
            <person name="Mizushima-Sugano J."/>
            <person name="Satoh T."/>
            <person name="Shirai Y."/>
            <person name="Takahashi Y."/>
            <person name="Nakagawa K."/>
            <person name="Okumura K."/>
            <person name="Nagase T."/>
            <person name="Nomura N."/>
            <person name="Kikuchi H."/>
            <person name="Masuho Y."/>
            <person name="Yamashita R."/>
            <person name="Nakai K."/>
            <person name="Yada T."/>
            <person name="Nakamura Y."/>
            <person name="Ohara O."/>
            <person name="Isogai T."/>
            <person name="Sugano S."/>
        </authorList>
    </citation>
    <scope>NUCLEOTIDE SEQUENCE [LARGE SCALE MRNA] (ISOFORM 2)</scope>
    <scope>NUCLEOTIDE SEQUENCE [LARGE SCALE MRNA] OF 204-422</scope>
    <source>
        <tissue>Cerebellum</tissue>
    </source>
</reference>
<reference key="4">
    <citation type="journal article" date="2006" name="Nature">
        <title>The DNA sequence and biological annotation of human chromosome 1.</title>
        <authorList>
            <person name="Gregory S.G."/>
            <person name="Barlow K.F."/>
            <person name="McLay K.E."/>
            <person name="Kaul R."/>
            <person name="Swarbreck D."/>
            <person name="Dunham A."/>
            <person name="Scott C.E."/>
            <person name="Howe K.L."/>
            <person name="Woodfine K."/>
            <person name="Spencer C.C.A."/>
            <person name="Jones M.C."/>
            <person name="Gillson C."/>
            <person name="Searle S."/>
            <person name="Zhou Y."/>
            <person name="Kokocinski F."/>
            <person name="McDonald L."/>
            <person name="Evans R."/>
            <person name="Phillips K."/>
            <person name="Atkinson A."/>
            <person name="Cooper R."/>
            <person name="Jones C."/>
            <person name="Hall R.E."/>
            <person name="Andrews T.D."/>
            <person name="Lloyd C."/>
            <person name="Ainscough R."/>
            <person name="Almeida J.P."/>
            <person name="Ambrose K.D."/>
            <person name="Anderson F."/>
            <person name="Andrew R.W."/>
            <person name="Ashwell R.I.S."/>
            <person name="Aubin K."/>
            <person name="Babbage A.K."/>
            <person name="Bagguley C.L."/>
            <person name="Bailey J."/>
            <person name="Beasley H."/>
            <person name="Bethel G."/>
            <person name="Bird C.P."/>
            <person name="Bray-Allen S."/>
            <person name="Brown J.Y."/>
            <person name="Brown A.J."/>
            <person name="Buckley D."/>
            <person name="Burton J."/>
            <person name="Bye J."/>
            <person name="Carder C."/>
            <person name="Chapman J.C."/>
            <person name="Clark S.Y."/>
            <person name="Clarke G."/>
            <person name="Clee C."/>
            <person name="Cobley V."/>
            <person name="Collier R.E."/>
            <person name="Corby N."/>
            <person name="Coville G.J."/>
            <person name="Davies J."/>
            <person name="Deadman R."/>
            <person name="Dunn M."/>
            <person name="Earthrowl M."/>
            <person name="Ellington A.G."/>
            <person name="Errington H."/>
            <person name="Frankish A."/>
            <person name="Frankland J."/>
            <person name="French L."/>
            <person name="Garner P."/>
            <person name="Garnett J."/>
            <person name="Gay L."/>
            <person name="Ghori M.R.J."/>
            <person name="Gibson R."/>
            <person name="Gilby L.M."/>
            <person name="Gillett W."/>
            <person name="Glithero R.J."/>
            <person name="Grafham D.V."/>
            <person name="Griffiths C."/>
            <person name="Griffiths-Jones S."/>
            <person name="Grocock R."/>
            <person name="Hammond S."/>
            <person name="Harrison E.S.I."/>
            <person name="Hart E."/>
            <person name="Haugen E."/>
            <person name="Heath P.D."/>
            <person name="Holmes S."/>
            <person name="Holt K."/>
            <person name="Howden P.J."/>
            <person name="Hunt A.R."/>
            <person name="Hunt S.E."/>
            <person name="Hunter G."/>
            <person name="Isherwood J."/>
            <person name="James R."/>
            <person name="Johnson C."/>
            <person name="Johnson D."/>
            <person name="Joy A."/>
            <person name="Kay M."/>
            <person name="Kershaw J.K."/>
            <person name="Kibukawa M."/>
            <person name="Kimberley A.M."/>
            <person name="King A."/>
            <person name="Knights A.J."/>
            <person name="Lad H."/>
            <person name="Laird G."/>
            <person name="Lawlor S."/>
            <person name="Leongamornlert D.A."/>
            <person name="Lloyd D.M."/>
            <person name="Loveland J."/>
            <person name="Lovell J."/>
            <person name="Lush M.J."/>
            <person name="Lyne R."/>
            <person name="Martin S."/>
            <person name="Mashreghi-Mohammadi M."/>
            <person name="Matthews L."/>
            <person name="Matthews N.S.W."/>
            <person name="McLaren S."/>
            <person name="Milne S."/>
            <person name="Mistry S."/>
            <person name="Moore M.J.F."/>
            <person name="Nickerson T."/>
            <person name="O'Dell C.N."/>
            <person name="Oliver K."/>
            <person name="Palmeiri A."/>
            <person name="Palmer S.A."/>
            <person name="Parker A."/>
            <person name="Patel D."/>
            <person name="Pearce A.V."/>
            <person name="Peck A.I."/>
            <person name="Pelan S."/>
            <person name="Phelps K."/>
            <person name="Phillimore B.J."/>
            <person name="Plumb R."/>
            <person name="Rajan J."/>
            <person name="Raymond C."/>
            <person name="Rouse G."/>
            <person name="Saenphimmachak C."/>
            <person name="Sehra H.K."/>
            <person name="Sheridan E."/>
            <person name="Shownkeen R."/>
            <person name="Sims S."/>
            <person name="Skuce C.D."/>
            <person name="Smith M."/>
            <person name="Steward C."/>
            <person name="Subramanian S."/>
            <person name="Sycamore N."/>
            <person name="Tracey A."/>
            <person name="Tromans A."/>
            <person name="Van Helmond Z."/>
            <person name="Wall M."/>
            <person name="Wallis J.M."/>
            <person name="White S."/>
            <person name="Whitehead S.L."/>
            <person name="Wilkinson J.E."/>
            <person name="Willey D.L."/>
            <person name="Williams H."/>
            <person name="Wilming L."/>
            <person name="Wray P.W."/>
            <person name="Wu Z."/>
            <person name="Coulson A."/>
            <person name="Vaudin M."/>
            <person name="Sulston J.E."/>
            <person name="Durbin R.M."/>
            <person name="Hubbard T."/>
            <person name="Wooster R."/>
            <person name="Dunham I."/>
            <person name="Carter N.P."/>
            <person name="McVean G."/>
            <person name="Ross M.T."/>
            <person name="Harrow J."/>
            <person name="Olson M.V."/>
            <person name="Beck S."/>
            <person name="Rogers J."/>
            <person name="Bentley D.R."/>
        </authorList>
    </citation>
    <scope>NUCLEOTIDE SEQUENCE [LARGE SCALE GENOMIC DNA]</scope>
</reference>
<reference key="5">
    <citation type="submission" date="2005-09" db="EMBL/GenBank/DDBJ databases">
        <authorList>
            <person name="Mural R.J."/>
            <person name="Istrail S."/>
            <person name="Sutton G.G."/>
            <person name="Florea L."/>
            <person name="Halpern A.L."/>
            <person name="Mobarry C.M."/>
            <person name="Lippert R."/>
            <person name="Walenz B."/>
            <person name="Shatkay H."/>
            <person name="Dew I."/>
            <person name="Miller J.R."/>
            <person name="Flanigan M.J."/>
            <person name="Edwards N.J."/>
            <person name="Bolanos R."/>
            <person name="Fasulo D."/>
            <person name="Halldorsson B.V."/>
            <person name="Hannenhalli S."/>
            <person name="Turner R."/>
            <person name="Yooseph S."/>
            <person name="Lu F."/>
            <person name="Nusskern D.R."/>
            <person name="Shue B.C."/>
            <person name="Zheng X.H."/>
            <person name="Zhong F."/>
            <person name="Delcher A.L."/>
            <person name="Huson D.H."/>
            <person name="Kravitz S.A."/>
            <person name="Mouchard L."/>
            <person name="Reinert K."/>
            <person name="Remington K.A."/>
            <person name="Clark A.G."/>
            <person name="Waterman M.S."/>
            <person name="Eichler E.E."/>
            <person name="Adams M.D."/>
            <person name="Hunkapiller M.W."/>
            <person name="Myers E.W."/>
            <person name="Venter J.C."/>
        </authorList>
    </citation>
    <scope>NUCLEOTIDE SEQUENCE [LARGE SCALE GENOMIC DNA]</scope>
</reference>
<reference key="6">
    <citation type="journal article" date="2004" name="Genome Res.">
        <title>The status, quality, and expansion of the NIH full-length cDNA project: the Mammalian Gene Collection (MGC).</title>
        <authorList>
            <consortium name="The MGC Project Team"/>
        </authorList>
    </citation>
    <scope>NUCLEOTIDE SEQUENCE [LARGE SCALE MRNA] (ISOFORM 2)</scope>
    <scope>NUCLEOTIDE SEQUENCE [LARGE SCALE MRNA] OF 163-422 (ISOFORM 1)</scope>
    <source>
        <tissue>Cervix</tissue>
        <tissue>Uterus</tissue>
    </source>
</reference>
<reference key="7">
    <citation type="journal article" date="2001" name="Genome Res.">
        <title>Identification of human epidermal differentiation complex (EDC)-encoded genes by subtractive hybridization of entire YACs to a gridded keratinocyte cDNA library.</title>
        <authorList>
            <person name="Marenholz I."/>
            <person name="Zirra M."/>
            <person name="Fischer D.F."/>
            <person name="Backendorf C."/>
            <person name="Ziegler A."/>
            <person name="Mischke D."/>
        </authorList>
    </citation>
    <scope>NUCLEOTIDE SEQUENCE [MRNA] OF 282-422</scope>
    <scope>TISSUE SPECIFICITY</scope>
    <source>
        <tissue>Keratinocyte</tissue>
    </source>
</reference>
<reference key="8">
    <citation type="submission" date="1998-12" db="EMBL/GenBank/DDBJ databases">
        <title>Functional prediction of the coding sequences of 121 new genes deduced by analysis of cDNA clones from human fetal liver.</title>
        <authorList>
            <person name="Zhang C."/>
            <person name="Yu Y."/>
            <person name="Zhang S."/>
            <person name="Wei H."/>
            <person name="Zhou G."/>
            <person name="Ouyang S."/>
            <person name="Luo L."/>
            <person name="Bi J."/>
            <person name="Liu M."/>
            <person name="He F."/>
        </authorList>
    </citation>
    <scope>NUCLEOTIDE SEQUENCE [LARGE SCALE MRNA] OF 312-386</scope>
    <source>
        <tissue>Fetal liver</tissue>
    </source>
</reference>
<reference key="9">
    <citation type="submission" date="2004-06" db="EMBL/GenBank/DDBJ databases">
        <title>Cloning of human full open reading frames in Gateway(TM) system entry vector (pDONR201).</title>
        <authorList>
            <person name="Ebert L."/>
            <person name="Schick M."/>
            <person name="Neubert P."/>
            <person name="Schatten R."/>
            <person name="Henze S."/>
            <person name="Korn B."/>
        </authorList>
    </citation>
    <scope>NUCLEOTIDE SEQUENCE [LARGE SCALE MRNA] OF 352-422</scope>
</reference>
<reference key="10">
    <citation type="journal article" date="2009" name="Anal. Chem.">
        <title>Lys-N and trypsin cover complementary parts of the phosphoproteome in a refined SCX-based approach.</title>
        <authorList>
            <person name="Gauci S."/>
            <person name="Helbig A.O."/>
            <person name="Slijper M."/>
            <person name="Krijgsveld J."/>
            <person name="Heck A.J."/>
            <person name="Mohammed S."/>
        </authorList>
    </citation>
    <scope>ACETYLATION [LARGE SCALE ANALYSIS] AT MET-1</scope>
    <scope>IDENTIFICATION BY MASS SPECTROMETRY [LARGE SCALE ANALYSIS]</scope>
</reference>
<reference key="11">
    <citation type="journal article" date="2011" name="BMC Syst. Biol.">
        <title>Initial characterization of the human central proteome.</title>
        <authorList>
            <person name="Burkard T.R."/>
            <person name="Planyavsky M."/>
            <person name="Kaupe I."/>
            <person name="Breitwieser F.P."/>
            <person name="Buerckstuemmer T."/>
            <person name="Bennett K.L."/>
            <person name="Superti-Furga G."/>
            <person name="Colinge J."/>
        </authorList>
    </citation>
    <scope>IDENTIFICATION BY MASS SPECTROMETRY [LARGE SCALE ANALYSIS]</scope>
</reference>
<reference key="12">
    <citation type="journal article" date="2012" name="Mol. Cell. Proteomics">
        <title>Comparative large-scale characterisation of plant vs. mammal proteins reveals similar and idiosyncratic N-alpha acetylation features.</title>
        <authorList>
            <person name="Bienvenut W.V."/>
            <person name="Sumpton D."/>
            <person name="Martinez A."/>
            <person name="Lilla S."/>
            <person name="Espagne C."/>
            <person name="Meinnel T."/>
            <person name="Giglione C."/>
        </authorList>
    </citation>
    <scope>ACETYLATION [LARGE SCALE ANALYSIS] AT MET-1</scope>
    <scope>IDENTIFICATION BY MASS SPECTROMETRY [LARGE SCALE ANALYSIS]</scope>
</reference>
<reference evidence="9" key="13">
    <citation type="journal article" date="2012" name="Mol. Cell. Proteomics">
        <title>A human ubiquitin conjugating enzyme (E2)-HECT E3 ligase structure-function screen.</title>
        <authorList>
            <person name="Sheng Y."/>
            <person name="Hong J.H."/>
            <person name="Doherty R."/>
            <person name="Srikumar T."/>
            <person name="Shloush J."/>
            <person name="Avvakumov G.V."/>
            <person name="Walker J.R."/>
            <person name="Xue S."/>
            <person name="Neculai D."/>
            <person name="Wan J.W."/>
            <person name="Kim S.K."/>
            <person name="Arrowsmith C.H."/>
            <person name="Raught B."/>
            <person name="Dhe-Paganon S."/>
        </authorList>
    </citation>
    <scope>X-RAY CRYSTALLOGRAPHY (2.56 ANGSTROMS) OF 247-414</scope>
    <scope>AUTOUBIQUITINATION</scope>
</reference>
<gene>
    <name type="primary">UBE2Q1</name>
    <name type="synonym">NICE5</name>
    <name type="synonym">UBE2Q</name>
    <name type="ORF">PRO3094</name>
</gene>